<name>ISCR_ECOBW</name>
<gene>
    <name evidence="1" type="primary">iscR</name>
    <name type="ordered locus">BWG_2295</name>
</gene>
<keyword id="KW-0001">2Fe-2S</keyword>
<keyword id="KW-0010">Activator</keyword>
<keyword id="KW-0238">DNA-binding</keyword>
<keyword id="KW-0408">Iron</keyword>
<keyword id="KW-0411">Iron-sulfur</keyword>
<keyword id="KW-0479">Metal-binding</keyword>
<keyword id="KW-0678">Repressor</keyword>
<keyword id="KW-0804">Transcription</keyword>
<keyword id="KW-0805">Transcription regulation</keyword>
<dbReference type="EMBL" id="CP001396">
    <property type="protein sequence ID" value="ACR62963.1"/>
    <property type="molecule type" value="Genomic_DNA"/>
</dbReference>
<dbReference type="RefSeq" id="WP_001241357.1">
    <property type="nucleotide sequence ID" value="NC_012759.1"/>
</dbReference>
<dbReference type="SMR" id="C4ZXA6"/>
<dbReference type="GeneID" id="86947421"/>
<dbReference type="KEGG" id="ebw:BWG_2295"/>
<dbReference type="HOGENOM" id="CLU_107144_0_0_6"/>
<dbReference type="GO" id="GO:0005829">
    <property type="term" value="C:cytosol"/>
    <property type="evidence" value="ECO:0007669"/>
    <property type="project" value="TreeGrafter"/>
</dbReference>
<dbReference type="GO" id="GO:0051537">
    <property type="term" value="F:2 iron, 2 sulfur cluster binding"/>
    <property type="evidence" value="ECO:0007669"/>
    <property type="project" value="UniProtKB-KW"/>
</dbReference>
<dbReference type="GO" id="GO:0003700">
    <property type="term" value="F:DNA-binding transcription factor activity"/>
    <property type="evidence" value="ECO:0007669"/>
    <property type="project" value="UniProtKB-UniRule"/>
</dbReference>
<dbReference type="GO" id="GO:0003690">
    <property type="term" value="F:double-stranded DNA binding"/>
    <property type="evidence" value="ECO:0007669"/>
    <property type="project" value="UniProtKB-UniRule"/>
</dbReference>
<dbReference type="GO" id="GO:0005506">
    <property type="term" value="F:iron ion binding"/>
    <property type="evidence" value="ECO:0007669"/>
    <property type="project" value="UniProtKB-UniRule"/>
</dbReference>
<dbReference type="FunFam" id="1.10.10.10:FF:000026">
    <property type="entry name" value="HTH-type transcriptional regulator IscR"/>
    <property type="match status" value="1"/>
</dbReference>
<dbReference type="Gene3D" id="1.10.10.10">
    <property type="entry name" value="Winged helix-like DNA-binding domain superfamily/Winged helix DNA-binding domain"/>
    <property type="match status" value="1"/>
</dbReference>
<dbReference type="HAMAP" id="MF_01176">
    <property type="entry name" value="HTH_type_IscR"/>
    <property type="match status" value="1"/>
</dbReference>
<dbReference type="InterPro" id="IPR010242">
    <property type="entry name" value="TF_HTH_IscR"/>
</dbReference>
<dbReference type="InterPro" id="IPR030489">
    <property type="entry name" value="TR_Rrf2-type_CS"/>
</dbReference>
<dbReference type="InterPro" id="IPR000944">
    <property type="entry name" value="Tscrpt_reg_Rrf2"/>
</dbReference>
<dbReference type="InterPro" id="IPR036388">
    <property type="entry name" value="WH-like_DNA-bd_sf"/>
</dbReference>
<dbReference type="InterPro" id="IPR036390">
    <property type="entry name" value="WH_DNA-bd_sf"/>
</dbReference>
<dbReference type="NCBIfam" id="TIGR02010">
    <property type="entry name" value="IscR"/>
    <property type="match status" value="1"/>
</dbReference>
<dbReference type="NCBIfam" id="NF008110">
    <property type="entry name" value="PRK10857.1"/>
    <property type="match status" value="1"/>
</dbReference>
<dbReference type="NCBIfam" id="TIGR00738">
    <property type="entry name" value="rrf2_super"/>
    <property type="match status" value="1"/>
</dbReference>
<dbReference type="PANTHER" id="PTHR33221:SF5">
    <property type="entry name" value="HTH-TYPE TRANSCRIPTIONAL REGULATOR ISCR"/>
    <property type="match status" value="1"/>
</dbReference>
<dbReference type="PANTHER" id="PTHR33221">
    <property type="entry name" value="WINGED HELIX-TURN-HELIX TRANSCRIPTIONAL REGULATOR, RRF2 FAMILY"/>
    <property type="match status" value="1"/>
</dbReference>
<dbReference type="Pfam" id="PF02082">
    <property type="entry name" value="Rrf2"/>
    <property type="match status" value="1"/>
</dbReference>
<dbReference type="SUPFAM" id="SSF46785">
    <property type="entry name" value="Winged helix' DNA-binding domain"/>
    <property type="match status" value="1"/>
</dbReference>
<dbReference type="PROSITE" id="PS01332">
    <property type="entry name" value="HTH_RRF2_1"/>
    <property type="match status" value="1"/>
</dbReference>
<dbReference type="PROSITE" id="PS51197">
    <property type="entry name" value="HTH_RRF2_2"/>
    <property type="match status" value="1"/>
</dbReference>
<accession>C4ZXA6</accession>
<feature type="chain" id="PRO_1000213748" description="HTH-type transcriptional regulator IscR">
    <location>
        <begin position="1"/>
        <end position="162"/>
    </location>
</feature>
<feature type="domain" description="HTH rrf2-type" evidence="1">
    <location>
        <begin position="2"/>
        <end position="131"/>
    </location>
</feature>
<feature type="DNA-binding region" description="H-T-H motif" evidence="1">
    <location>
        <begin position="28"/>
        <end position="51"/>
    </location>
</feature>
<feature type="region of interest" description="Disordered" evidence="2">
    <location>
        <begin position="140"/>
        <end position="162"/>
    </location>
</feature>
<feature type="compositionally biased region" description="Basic and acidic residues" evidence="2">
    <location>
        <begin position="143"/>
        <end position="162"/>
    </location>
</feature>
<feature type="binding site" evidence="1">
    <location>
        <position position="92"/>
    </location>
    <ligand>
        <name>[2Fe-2S] cluster</name>
        <dbReference type="ChEBI" id="CHEBI:190135"/>
    </ligand>
</feature>
<feature type="binding site" evidence="1">
    <location>
        <position position="98"/>
    </location>
    <ligand>
        <name>[2Fe-2S] cluster</name>
        <dbReference type="ChEBI" id="CHEBI:190135"/>
    </ligand>
</feature>
<feature type="binding site" evidence="1">
    <location>
        <position position="104"/>
    </location>
    <ligand>
        <name>[2Fe-2S] cluster</name>
        <dbReference type="ChEBI" id="CHEBI:190135"/>
    </ligand>
</feature>
<sequence>MRLTSKGRYAVTAMLDVALNSEAGPVPLADISERQGISLSYLEQLFSRLRKNGLVSSVRGPGGGYLLGKDASSIAVGEVISAVDESVDATRCQGKGGCQGGDKCLTHALWRDLSDRLTGFLNNITLGELVNNQEVLDVSGRQHTHDAPRTRTQDAIDVKLRA</sequence>
<proteinExistence type="inferred from homology"/>
<reference key="1">
    <citation type="journal article" date="2009" name="J. Bacteriol.">
        <title>Genomic sequencing reveals regulatory mutations and recombinational events in the widely used MC4100 lineage of Escherichia coli K-12.</title>
        <authorList>
            <person name="Ferenci T."/>
            <person name="Zhou Z."/>
            <person name="Betteridge T."/>
            <person name="Ren Y."/>
            <person name="Liu Y."/>
            <person name="Feng L."/>
            <person name="Reeves P.R."/>
            <person name="Wang L."/>
        </authorList>
    </citation>
    <scope>NUCLEOTIDE SEQUENCE [LARGE SCALE GENOMIC DNA]</scope>
    <source>
        <strain>K12 / MC4100 / BW2952</strain>
    </source>
</reference>
<protein>
    <recommendedName>
        <fullName evidence="1">HTH-type transcriptional regulator IscR</fullName>
    </recommendedName>
</protein>
<evidence type="ECO:0000255" key="1">
    <source>
        <dbReference type="HAMAP-Rule" id="MF_01176"/>
    </source>
</evidence>
<evidence type="ECO:0000256" key="2">
    <source>
        <dbReference type="SAM" id="MobiDB-lite"/>
    </source>
</evidence>
<organism>
    <name type="scientific">Escherichia coli (strain K12 / MC4100 / BW2952)</name>
    <dbReference type="NCBI Taxonomy" id="595496"/>
    <lineage>
        <taxon>Bacteria</taxon>
        <taxon>Pseudomonadati</taxon>
        <taxon>Pseudomonadota</taxon>
        <taxon>Gammaproteobacteria</taxon>
        <taxon>Enterobacterales</taxon>
        <taxon>Enterobacteriaceae</taxon>
        <taxon>Escherichia</taxon>
    </lineage>
</organism>
<comment type="function">
    <text evidence="1">Regulates the transcription of several operons and genes involved in the biogenesis of Fe-S clusters and Fe-S-containing proteins.</text>
</comment>
<comment type="cofactor">
    <cofactor evidence="1">
        <name>[2Fe-2S] cluster</name>
        <dbReference type="ChEBI" id="CHEBI:190135"/>
    </cofactor>
    <text evidence="1">Binds 1 [2Fe-2S] cluster.</text>
</comment>